<feature type="chain" id="PRO_1000080005" description="tRNA modification GTPase MnmE">
    <location>
        <begin position="1"/>
        <end position="452"/>
    </location>
</feature>
<feature type="domain" description="TrmE-type G">
    <location>
        <begin position="216"/>
        <end position="375"/>
    </location>
</feature>
<feature type="binding site" evidence="1">
    <location>
        <position position="25"/>
    </location>
    <ligand>
        <name>(6S)-5-formyl-5,6,7,8-tetrahydrofolate</name>
        <dbReference type="ChEBI" id="CHEBI:57457"/>
    </ligand>
</feature>
<feature type="binding site" evidence="1">
    <location>
        <position position="81"/>
    </location>
    <ligand>
        <name>(6S)-5-formyl-5,6,7,8-tetrahydrofolate</name>
        <dbReference type="ChEBI" id="CHEBI:57457"/>
    </ligand>
</feature>
<feature type="binding site" evidence="1">
    <location>
        <position position="120"/>
    </location>
    <ligand>
        <name>(6S)-5-formyl-5,6,7,8-tetrahydrofolate</name>
        <dbReference type="ChEBI" id="CHEBI:57457"/>
    </ligand>
</feature>
<feature type="binding site" evidence="1">
    <location>
        <begin position="226"/>
        <end position="231"/>
    </location>
    <ligand>
        <name>GTP</name>
        <dbReference type="ChEBI" id="CHEBI:37565"/>
    </ligand>
</feature>
<feature type="binding site" evidence="1">
    <location>
        <position position="226"/>
    </location>
    <ligand>
        <name>K(+)</name>
        <dbReference type="ChEBI" id="CHEBI:29103"/>
    </ligand>
</feature>
<feature type="binding site" evidence="1">
    <location>
        <position position="230"/>
    </location>
    <ligand>
        <name>Mg(2+)</name>
        <dbReference type="ChEBI" id="CHEBI:18420"/>
    </ligand>
</feature>
<feature type="binding site" evidence="1">
    <location>
        <begin position="245"/>
        <end position="251"/>
    </location>
    <ligand>
        <name>GTP</name>
        <dbReference type="ChEBI" id="CHEBI:37565"/>
    </ligand>
</feature>
<feature type="binding site" evidence="1">
    <location>
        <position position="245"/>
    </location>
    <ligand>
        <name>K(+)</name>
        <dbReference type="ChEBI" id="CHEBI:29103"/>
    </ligand>
</feature>
<feature type="binding site" evidence="1">
    <location>
        <position position="247"/>
    </location>
    <ligand>
        <name>K(+)</name>
        <dbReference type="ChEBI" id="CHEBI:29103"/>
    </ligand>
</feature>
<feature type="binding site" evidence="1">
    <location>
        <position position="250"/>
    </location>
    <ligand>
        <name>K(+)</name>
        <dbReference type="ChEBI" id="CHEBI:29103"/>
    </ligand>
</feature>
<feature type="binding site" evidence="1">
    <location>
        <position position="251"/>
    </location>
    <ligand>
        <name>Mg(2+)</name>
        <dbReference type="ChEBI" id="CHEBI:18420"/>
    </ligand>
</feature>
<feature type="binding site" evidence="1">
    <location>
        <begin position="270"/>
        <end position="273"/>
    </location>
    <ligand>
        <name>GTP</name>
        <dbReference type="ChEBI" id="CHEBI:37565"/>
    </ligand>
</feature>
<feature type="binding site" evidence="1">
    <location>
        <position position="452"/>
    </location>
    <ligand>
        <name>(6S)-5-formyl-5,6,7,8-tetrahydrofolate</name>
        <dbReference type="ChEBI" id="CHEBI:57457"/>
    </ligand>
</feature>
<sequence length="452" mass="49731">MTYVFPETIAAQATPSGRGGIGVVRVSGEKTKAIAQKILGCVPKPRYATFVKFRDSGSVIDEGIALYFPKPNSFTGEDVLELHGHGGPVVMDRLLNTVLKAGARQARPGEFSERAFLNNKIDLAQAEAVADLINASSEQAARSAMRSLQGEFSKRIHQLVDALIQLRMYIEASIDFPEEEIDFLADERIKETLENLTHQVQEIEKTAKQGALLREGITVVIAGEPNVGKSSLLNLLSGQETAIVTDIAGTTRDIIRESIHIDGLPIHVVDTAGLRLTEDVVEKEGVRRTQKAVQQADLLLLMIDASKPTEDFKKIIAQWFSENDNKIPTLIVENKIDLIGEAPRKENKEYPHIKLSVKTRAGVELLKNHLKNTAGFEATHENNFIARRRHCDAIARASAFLKNANNHLLNQKAGELVAEDLKLAQNALSEITGEFTSDDLLGKIFSEFCIGK</sequence>
<keyword id="KW-0963">Cytoplasm</keyword>
<keyword id="KW-0342">GTP-binding</keyword>
<keyword id="KW-0378">Hydrolase</keyword>
<keyword id="KW-0460">Magnesium</keyword>
<keyword id="KW-0479">Metal-binding</keyword>
<keyword id="KW-0547">Nucleotide-binding</keyword>
<keyword id="KW-0630">Potassium</keyword>
<keyword id="KW-0819">tRNA processing</keyword>
<dbReference type="EC" id="3.6.-.-" evidence="1"/>
<dbReference type="EMBL" id="CP000733">
    <property type="protein sequence ID" value="ABS78334.2"/>
    <property type="status" value="ALT_INIT"/>
    <property type="molecule type" value="Genomic_DNA"/>
</dbReference>
<dbReference type="SMR" id="A9KBS9"/>
<dbReference type="KEGG" id="cbd:CBUD_0199"/>
<dbReference type="HOGENOM" id="CLU_019624_4_1_6"/>
<dbReference type="Proteomes" id="UP000008555">
    <property type="component" value="Chromosome"/>
</dbReference>
<dbReference type="GO" id="GO:0005829">
    <property type="term" value="C:cytosol"/>
    <property type="evidence" value="ECO:0007669"/>
    <property type="project" value="TreeGrafter"/>
</dbReference>
<dbReference type="GO" id="GO:0005525">
    <property type="term" value="F:GTP binding"/>
    <property type="evidence" value="ECO:0007669"/>
    <property type="project" value="UniProtKB-UniRule"/>
</dbReference>
<dbReference type="GO" id="GO:0003924">
    <property type="term" value="F:GTPase activity"/>
    <property type="evidence" value="ECO:0007669"/>
    <property type="project" value="UniProtKB-UniRule"/>
</dbReference>
<dbReference type="GO" id="GO:0046872">
    <property type="term" value="F:metal ion binding"/>
    <property type="evidence" value="ECO:0007669"/>
    <property type="project" value="UniProtKB-KW"/>
</dbReference>
<dbReference type="GO" id="GO:0030488">
    <property type="term" value="P:tRNA methylation"/>
    <property type="evidence" value="ECO:0007669"/>
    <property type="project" value="TreeGrafter"/>
</dbReference>
<dbReference type="GO" id="GO:0002098">
    <property type="term" value="P:tRNA wobble uridine modification"/>
    <property type="evidence" value="ECO:0007669"/>
    <property type="project" value="TreeGrafter"/>
</dbReference>
<dbReference type="CDD" id="cd04164">
    <property type="entry name" value="trmE"/>
    <property type="match status" value="1"/>
</dbReference>
<dbReference type="CDD" id="cd14858">
    <property type="entry name" value="TrmE_N"/>
    <property type="match status" value="1"/>
</dbReference>
<dbReference type="FunFam" id="3.30.1360.120:FF:000001">
    <property type="entry name" value="tRNA modification GTPase MnmE"/>
    <property type="match status" value="1"/>
</dbReference>
<dbReference type="FunFam" id="3.40.50.300:FF:000249">
    <property type="entry name" value="tRNA modification GTPase MnmE"/>
    <property type="match status" value="1"/>
</dbReference>
<dbReference type="Gene3D" id="3.40.50.300">
    <property type="entry name" value="P-loop containing nucleotide triphosphate hydrolases"/>
    <property type="match status" value="1"/>
</dbReference>
<dbReference type="Gene3D" id="3.30.1360.120">
    <property type="entry name" value="Probable tRNA modification gtpase trme, domain 1"/>
    <property type="match status" value="1"/>
</dbReference>
<dbReference type="Gene3D" id="1.20.120.430">
    <property type="entry name" value="tRNA modification GTPase MnmE domain 2"/>
    <property type="match status" value="1"/>
</dbReference>
<dbReference type="HAMAP" id="MF_00379">
    <property type="entry name" value="GTPase_MnmE"/>
    <property type="match status" value="1"/>
</dbReference>
<dbReference type="InterPro" id="IPR031168">
    <property type="entry name" value="G_TrmE"/>
</dbReference>
<dbReference type="InterPro" id="IPR006073">
    <property type="entry name" value="GTP-bd"/>
</dbReference>
<dbReference type="InterPro" id="IPR018948">
    <property type="entry name" value="GTP-bd_TrmE_N"/>
</dbReference>
<dbReference type="InterPro" id="IPR004520">
    <property type="entry name" value="GTPase_MnmE"/>
</dbReference>
<dbReference type="InterPro" id="IPR027368">
    <property type="entry name" value="MnmE_dom2"/>
</dbReference>
<dbReference type="InterPro" id="IPR025867">
    <property type="entry name" value="MnmE_helical"/>
</dbReference>
<dbReference type="InterPro" id="IPR027417">
    <property type="entry name" value="P-loop_NTPase"/>
</dbReference>
<dbReference type="InterPro" id="IPR005225">
    <property type="entry name" value="Small_GTP-bd"/>
</dbReference>
<dbReference type="InterPro" id="IPR027266">
    <property type="entry name" value="TrmE/GcvT_dom1"/>
</dbReference>
<dbReference type="NCBIfam" id="TIGR00450">
    <property type="entry name" value="mnmE_trmE_thdF"/>
    <property type="match status" value="1"/>
</dbReference>
<dbReference type="NCBIfam" id="NF003661">
    <property type="entry name" value="PRK05291.1-3"/>
    <property type="match status" value="1"/>
</dbReference>
<dbReference type="NCBIfam" id="TIGR00231">
    <property type="entry name" value="small_GTP"/>
    <property type="match status" value="1"/>
</dbReference>
<dbReference type="PANTHER" id="PTHR42714">
    <property type="entry name" value="TRNA MODIFICATION GTPASE GTPBP3"/>
    <property type="match status" value="1"/>
</dbReference>
<dbReference type="PANTHER" id="PTHR42714:SF2">
    <property type="entry name" value="TRNA MODIFICATION GTPASE GTPBP3, MITOCHONDRIAL"/>
    <property type="match status" value="1"/>
</dbReference>
<dbReference type="Pfam" id="PF01926">
    <property type="entry name" value="MMR_HSR1"/>
    <property type="match status" value="1"/>
</dbReference>
<dbReference type="Pfam" id="PF12631">
    <property type="entry name" value="MnmE_helical"/>
    <property type="match status" value="1"/>
</dbReference>
<dbReference type="Pfam" id="PF10396">
    <property type="entry name" value="TrmE_N"/>
    <property type="match status" value="1"/>
</dbReference>
<dbReference type="PRINTS" id="PR00326">
    <property type="entry name" value="GTP1OBG"/>
</dbReference>
<dbReference type="SUPFAM" id="SSF52540">
    <property type="entry name" value="P-loop containing nucleoside triphosphate hydrolases"/>
    <property type="match status" value="1"/>
</dbReference>
<dbReference type="SUPFAM" id="SSF116878">
    <property type="entry name" value="TrmE connector domain"/>
    <property type="match status" value="1"/>
</dbReference>
<dbReference type="PROSITE" id="PS51709">
    <property type="entry name" value="G_TRME"/>
    <property type="match status" value="1"/>
</dbReference>
<name>MNME_COXBN</name>
<proteinExistence type="inferred from homology"/>
<organism>
    <name type="scientific">Coxiella burnetii (strain Dugway 5J108-111)</name>
    <dbReference type="NCBI Taxonomy" id="434922"/>
    <lineage>
        <taxon>Bacteria</taxon>
        <taxon>Pseudomonadati</taxon>
        <taxon>Pseudomonadota</taxon>
        <taxon>Gammaproteobacteria</taxon>
        <taxon>Legionellales</taxon>
        <taxon>Coxiellaceae</taxon>
        <taxon>Coxiella</taxon>
    </lineage>
</organism>
<evidence type="ECO:0000255" key="1">
    <source>
        <dbReference type="HAMAP-Rule" id="MF_00379"/>
    </source>
</evidence>
<evidence type="ECO:0000305" key="2"/>
<gene>
    <name evidence="1" type="primary">mnmE</name>
    <name evidence="1" type="synonym">trmE</name>
    <name type="ordered locus">CBUD_0199</name>
</gene>
<comment type="function">
    <text evidence="1">Exhibits a very high intrinsic GTPase hydrolysis rate. Involved in the addition of a carboxymethylaminomethyl (cmnm) group at the wobble position (U34) of certain tRNAs, forming tRNA-cmnm(5)s(2)U34.</text>
</comment>
<comment type="cofactor">
    <cofactor evidence="1">
        <name>K(+)</name>
        <dbReference type="ChEBI" id="CHEBI:29103"/>
    </cofactor>
    <text evidence="1">Binds 1 potassium ion per subunit.</text>
</comment>
<comment type="subunit">
    <text evidence="1">Homodimer. Heterotetramer of two MnmE and two MnmG subunits.</text>
</comment>
<comment type="subcellular location">
    <subcellularLocation>
        <location evidence="1">Cytoplasm</location>
    </subcellularLocation>
</comment>
<comment type="similarity">
    <text evidence="1">Belongs to the TRAFAC class TrmE-Era-EngA-EngB-Septin-like GTPase superfamily. TrmE GTPase family.</text>
</comment>
<comment type="sequence caution" evidence="2">
    <conflict type="erroneous initiation">
        <sequence resource="EMBL-CDS" id="ABS78334"/>
    </conflict>
</comment>
<accession>A9KBS9</accession>
<protein>
    <recommendedName>
        <fullName evidence="1">tRNA modification GTPase MnmE</fullName>
        <ecNumber evidence="1">3.6.-.-</ecNumber>
    </recommendedName>
</protein>
<reference key="1">
    <citation type="journal article" date="2009" name="Infect. Immun.">
        <title>Comparative genomics reveal extensive transposon-mediated genomic plasticity and diversity among potential effector proteins within the genus Coxiella.</title>
        <authorList>
            <person name="Beare P.A."/>
            <person name="Unsworth N."/>
            <person name="Andoh M."/>
            <person name="Voth D.E."/>
            <person name="Omsland A."/>
            <person name="Gilk S.D."/>
            <person name="Williams K.P."/>
            <person name="Sobral B.W."/>
            <person name="Kupko J.J. III"/>
            <person name="Porcella S.F."/>
            <person name="Samuel J.E."/>
            <person name="Heinzen R.A."/>
        </authorList>
    </citation>
    <scope>NUCLEOTIDE SEQUENCE [LARGE SCALE GENOMIC DNA]</scope>
    <source>
        <strain>Dugway 5J108-111</strain>
    </source>
</reference>